<name>ATPF1_CERS5</name>
<evidence type="ECO:0000255" key="1">
    <source>
        <dbReference type="HAMAP-Rule" id="MF_01398"/>
    </source>
</evidence>
<dbReference type="EMBL" id="CP000661">
    <property type="protein sequence ID" value="ABP69103.1"/>
    <property type="molecule type" value="Genomic_DNA"/>
</dbReference>
<dbReference type="SMR" id="A4WNY9"/>
<dbReference type="STRING" id="349102.Rsph17025_0193"/>
<dbReference type="KEGG" id="rsq:Rsph17025_0193"/>
<dbReference type="eggNOG" id="COG0711">
    <property type="taxonomic scope" value="Bacteria"/>
</dbReference>
<dbReference type="HOGENOM" id="CLU_079215_6_2_5"/>
<dbReference type="BioCyc" id="RSPH349102:G1G8M-198-MONOMER"/>
<dbReference type="GO" id="GO:0005886">
    <property type="term" value="C:plasma membrane"/>
    <property type="evidence" value="ECO:0007669"/>
    <property type="project" value="UniProtKB-SubCell"/>
</dbReference>
<dbReference type="GO" id="GO:0045259">
    <property type="term" value="C:proton-transporting ATP synthase complex"/>
    <property type="evidence" value="ECO:0007669"/>
    <property type="project" value="UniProtKB-KW"/>
</dbReference>
<dbReference type="GO" id="GO:0046933">
    <property type="term" value="F:proton-transporting ATP synthase activity, rotational mechanism"/>
    <property type="evidence" value="ECO:0007669"/>
    <property type="project" value="UniProtKB-UniRule"/>
</dbReference>
<dbReference type="GO" id="GO:0046961">
    <property type="term" value="F:proton-transporting ATPase activity, rotational mechanism"/>
    <property type="evidence" value="ECO:0007669"/>
    <property type="project" value="TreeGrafter"/>
</dbReference>
<dbReference type="CDD" id="cd06503">
    <property type="entry name" value="ATP-synt_Fo_b"/>
    <property type="match status" value="1"/>
</dbReference>
<dbReference type="HAMAP" id="MF_01398">
    <property type="entry name" value="ATP_synth_b_bprime"/>
    <property type="match status" value="1"/>
</dbReference>
<dbReference type="InterPro" id="IPR002146">
    <property type="entry name" value="ATP_synth_b/b'su_bac/chlpt"/>
</dbReference>
<dbReference type="InterPro" id="IPR050059">
    <property type="entry name" value="ATP_synthase_B_chain"/>
</dbReference>
<dbReference type="NCBIfam" id="NF009989">
    <property type="entry name" value="PRK13455.1"/>
    <property type="match status" value="1"/>
</dbReference>
<dbReference type="PANTHER" id="PTHR33445:SF1">
    <property type="entry name" value="ATP SYNTHASE SUBUNIT B"/>
    <property type="match status" value="1"/>
</dbReference>
<dbReference type="PANTHER" id="PTHR33445">
    <property type="entry name" value="ATP SYNTHASE SUBUNIT B', CHLOROPLASTIC"/>
    <property type="match status" value="1"/>
</dbReference>
<dbReference type="Pfam" id="PF00430">
    <property type="entry name" value="ATP-synt_B"/>
    <property type="match status" value="1"/>
</dbReference>
<accession>A4WNY9</accession>
<protein>
    <recommendedName>
        <fullName evidence="1">ATP synthase subunit b 1</fullName>
    </recommendedName>
    <alternativeName>
        <fullName evidence="1">ATP synthase F(0) sector subunit b 1</fullName>
    </alternativeName>
    <alternativeName>
        <fullName evidence="1">ATPase subunit I 1</fullName>
    </alternativeName>
    <alternativeName>
        <fullName evidence="1">F-type ATPase subunit b 1</fullName>
        <shortName evidence="1">F-ATPase subunit b 1</shortName>
    </alternativeName>
</protein>
<comment type="function">
    <text evidence="1">F(1)F(0) ATP synthase produces ATP from ADP in the presence of a proton or sodium gradient. F-type ATPases consist of two structural domains, F(1) containing the extramembraneous catalytic core and F(0) containing the membrane proton channel, linked together by a central stalk and a peripheral stalk. During catalysis, ATP synthesis in the catalytic domain of F(1) is coupled via a rotary mechanism of the central stalk subunits to proton translocation.</text>
</comment>
<comment type="function">
    <text evidence="1">Component of the F(0) channel, it forms part of the peripheral stalk, linking F(1) to F(0).</text>
</comment>
<comment type="subunit">
    <text evidence="1">F-type ATPases have 2 components, F(1) - the catalytic core - and F(0) - the membrane proton channel. F(1) has five subunits: alpha(3), beta(3), gamma(1), delta(1), epsilon(1). F(0) has three main subunits: a(1), b(2) and c(10-14). The alpha and beta chains form an alternating ring which encloses part of the gamma chain. F(1) is attached to F(0) by a central stalk formed by the gamma and epsilon chains, while a peripheral stalk is formed by the delta and b chains.</text>
</comment>
<comment type="subcellular location">
    <subcellularLocation>
        <location evidence="1">Cell inner membrane</location>
        <topology evidence="1">Single-pass membrane protein</topology>
    </subcellularLocation>
</comment>
<comment type="similarity">
    <text evidence="1">Belongs to the ATPase B chain family.</text>
</comment>
<feature type="chain" id="PRO_5000238559" description="ATP synthase subunit b 1">
    <location>
        <begin position="1"/>
        <end position="184"/>
    </location>
</feature>
<feature type="transmembrane region" description="Helical" evidence="1">
    <location>
        <begin position="4"/>
        <end position="24"/>
    </location>
</feature>
<proteinExistence type="inferred from homology"/>
<sequence>MKKLSILAALAASPAMAATGPFFSLSNTNFIVTLAFLIFMGILVYAKVPGRILGMLDRRAVQIRSELEEARALREEARTILASYDRKQKEVQEQAARIVASARDEAQAAAEQAKADLKASIARRLAAAEDQIASAEAGAVRAIREQAISVAVAAASDVLARQMTPAATSASIDESIKEVEARFH</sequence>
<organism>
    <name type="scientific">Cereibacter sphaeroides (strain ATCC 17025 / ATH 2.4.3)</name>
    <name type="common">Rhodobacter sphaeroides</name>
    <dbReference type="NCBI Taxonomy" id="349102"/>
    <lineage>
        <taxon>Bacteria</taxon>
        <taxon>Pseudomonadati</taxon>
        <taxon>Pseudomonadota</taxon>
        <taxon>Alphaproteobacteria</taxon>
        <taxon>Rhodobacterales</taxon>
        <taxon>Paracoccaceae</taxon>
        <taxon>Cereibacter</taxon>
    </lineage>
</organism>
<reference key="1">
    <citation type="submission" date="2007-04" db="EMBL/GenBank/DDBJ databases">
        <title>Complete sequence of chromosome of Rhodobacter sphaeroides ATCC 17025.</title>
        <authorList>
            <consortium name="US DOE Joint Genome Institute"/>
            <person name="Copeland A."/>
            <person name="Lucas S."/>
            <person name="Lapidus A."/>
            <person name="Barry K."/>
            <person name="Detter J.C."/>
            <person name="Glavina del Rio T."/>
            <person name="Hammon N."/>
            <person name="Israni S."/>
            <person name="Dalin E."/>
            <person name="Tice H."/>
            <person name="Pitluck S."/>
            <person name="Chertkov O."/>
            <person name="Brettin T."/>
            <person name="Bruce D."/>
            <person name="Han C."/>
            <person name="Schmutz J."/>
            <person name="Larimer F."/>
            <person name="Land M."/>
            <person name="Hauser L."/>
            <person name="Kyrpides N."/>
            <person name="Kim E."/>
            <person name="Richardson P."/>
            <person name="Mackenzie C."/>
            <person name="Choudhary M."/>
            <person name="Donohue T.J."/>
            <person name="Kaplan S."/>
        </authorList>
    </citation>
    <scope>NUCLEOTIDE SEQUENCE [LARGE SCALE GENOMIC DNA]</scope>
    <source>
        <strain>ATCC 17025 / ATH 2.4.3</strain>
    </source>
</reference>
<keyword id="KW-0066">ATP synthesis</keyword>
<keyword id="KW-0997">Cell inner membrane</keyword>
<keyword id="KW-1003">Cell membrane</keyword>
<keyword id="KW-0138">CF(0)</keyword>
<keyword id="KW-0375">Hydrogen ion transport</keyword>
<keyword id="KW-0406">Ion transport</keyword>
<keyword id="KW-0472">Membrane</keyword>
<keyword id="KW-0812">Transmembrane</keyword>
<keyword id="KW-1133">Transmembrane helix</keyword>
<keyword id="KW-0813">Transport</keyword>
<gene>
    <name evidence="1" type="primary">atpF1</name>
    <name type="ordered locus">Rsph17025_0193</name>
</gene>